<comment type="function">
    <text evidence="7">Involved in anthocyanin and protoanthocyanidin biosynthesis by catalyzing the oxidation of leucoanthocyanidins into anthocyanidins.</text>
</comment>
<comment type="catalytic activity">
    <reaction evidence="1">
        <text>a (2R,3S,4S)-leucoanthocyanidin + 2-oxoglutarate + O2 = a 4-H-anthocyanidin with a 3-hydroxy group + succinate + CO2 + 2 H2O</text>
        <dbReference type="Rhea" id="RHEA:54432"/>
        <dbReference type="ChEBI" id="CHEBI:15377"/>
        <dbReference type="ChEBI" id="CHEBI:15379"/>
        <dbReference type="ChEBI" id="CHEBI:16526"/>
        <dbReference type="ChEBI" id="CHEBI:16810"/>
        <dbReference type="ChEBI" id="CHEBI:30031"/>
        <dbReference type="ChEBI" id="CHEBI:138176"/>
        <dbReference type="ChEBI" id="CHEBI:138177"/>
        <dbReference type="EC" id="1.14.20.4"/>
    </reaction>
</comment>
<comment type="cofactor">
    <cofactor evidence="2">
        <name>L-ascorbate</name>
        <dbReference type="ChEBI" id="CHEBI:38290"/>
    </cofactor>
    <text evidence="2">Binds 1 ascorbate molecule per subunit.</text>
</comment>
<comment type="cofactor">
    <cofactor evidence="3">
        <name>Fe(2+)</name>
        <dbReference type="ChEBI" id="CHEBI:29033"/>
    </cofactor>
    <text evidence="3">Binds 1 Fe(2+) ion per subunit.</text>
</comment>
<comment type="pathway">
    <text evidence="6">Pigment biosynthesis; anthocyanin biosynthesis.</text>
</comment>
<comment type="induction">
    <text evidence="4">Induced by light.</text>
</comment>
<comment type="similarity">
    <text evidence="6">Belongs to the iron/ascorbate-dependent oxidoreductase family.</text>
</comment>
<organism>
    <name type="scientific">Oryza sativa subsp. japonica</name>
    <name type="common">Rice</name>
    <dbReference type="NCBI Taxonomy" id="39947"/>
    <lineage>
        <taxon>Eukaryota</taxon>
        <taxon>Viridiplantae</taxon>
        <taxon>Streptophyta</taxon>
        <taxon>Embryophyta</taxon>
        <taxon>Tracheophyta</taxon>
        <taxon>Spermatophyta</taxon>
        <taxon>Magnoliopsida</taxon>
        <taxon>Liliopsida</taxon>
        <taxon>Poales</taxon>
        <taxon>Poaceae</taxon>
        <taxon>BOP clade</taxon>
        <taxon>Oryzoideae</taxon>
        <taxon>Oryzeae</taxon>
        <taxon>Oryzinae</taxon>
        <taxon>Oryza</taxon>
        <taxon>Oryza sativa</taxon>
    </lineage>
</organism>
<protein>
    <recommendedName>
        <fullName evidence="6">Leucoanthocyanidin dioxygenase 1</fullName>
        <shortName evidence="6">LDOX1</shortName>
        <shortName evidence="6">Leucocyanidin oxygenase 1</shortName>
        <ecNumber evidence="1">1.14.20.4</ecNumber>
    </recommendedName>
    <alternativeName>
        <fullName evidence="6">Anthocyanidin synthase</fullName>
        <shortName evidence="6">OsANS</shortName>
    </alternativeName>
    <alternativeName>
        <fullName evidence="6">Anthocyanidin synthase 1</fullName>
        <shortName evidence="5">OsANS1</shortName>
    </alternativeName>
    <alternativeName>
        <fullName evidence="6">Leucoanthocyanidin hydroxylase 1</fullName>
    </alternativeName>
</protein>
<evidence type="ECO:0000250" key="1">
    <source>
        <dbReference type="UniProtKB" id="A2WQ39"/>
    </source>
</evidence>
<evidence type="ECO:0000250" key="2">
    <source>
        <dbReference type="UniProtKB" id="Q96323"/>
    </source>
</evidence>
<evidence type="ECO:0000255" key="3">
    <source>
        <dbReference type="PROSITE-ProRule" id="PRU00805"/>
    </source>
</evidence>
<evidence type="ECO:0000269" key="4">
    <source>
    </source>
</evidence>
<evidence type="ECO:0000303" key="5">
    <source>
    </source>
</evidence>
<evidence type="ECO:0000305" key="6"/>
<evidence type="ECO:0000305" key="7">
    <source>
    </source>
</evidence>
<evidence type="ECO:0000312" key="8">
    <source>
        <dbReference type="EMBL" id="BAB61138.1"/>
    </source>
</evidence>
<evidence type="ECO:0000312" key="9">
    <source>
        <dbReference type="EMBL" id="BAB64051.1"/>
    </source>
</evidence>
<evidence type="ECO:0000312" key="10">
    <source>
        <dbReference type="EMBL" id="BAF04979.1"/>
    </source>
</evidence>
<dbReference type="EC" id="1.14.20.4" evidence="1"/>
<dbReference type="EMBL" id="AP003199">
    <property type="protein sequence ID" value="BAB61138.1"/>
    <property type="molecule type" value="Genomic_DNA"/>
</dbReference>
<dbReference type="EMBL" id="AP003198">
    <property type="protein sequence ID" value="BAB64051.1"/>
    <property type="molecule type" value="Genomic_DNA"/>
</dbReference>
<dbReference type="EMBL" id="AP008207">
    <property type="protein sequence ID" value="BAF04979.1"/>
    <property type="molecule type" value="Genomic_DNA"/>
</dbReference>
<dbReference type="EMBL" id="AP014957">
    <property type="protein sequence ID" value="BAS72185.1"/>
    <property type="molecule type" value="Genomic_DNA"/>
</dbReference>
<dbReference type="SMR" id="Q93VC3"/>
<dbReference type="FunCoup" id="Q93VC3">
    <property type="interactions" value="131"/>
</dbReference>
<dbReference type="STRING" id="39947.Q93VC3"/>
<dbReference type="PaxDb" id="39947-Q93VC3"/>
<dbReference type="EnsemblPlants" id="Os01t0372500-01">
    <property type="protein sequence ID" value="Os01t0372500-01"/>
    <property type="gene ID" value="Os01g0372500"/>
</dbReference>
<dbReference type="GeneID" id="4325716"/>
<dbReference type="Gramene" id="Os01t0372500-01">
    <property type="protein sequence ID" value="Os01t0372500-01"/>
    <property type="gene ID" value="Os01g0372500"/>
</dbReference>
<dbReference type="KEGG" id="dosa:Os01g0372500"/>
<dbReference type="KEGG" id="osa:4325716"/>
<dbReference type="eggNOG" id="KOG0143">
    <property type="taxonomic scope" value="Eukaryota"/>
</dbReference>
<dbReference type="HOGENOM" id="CLU_010119_16_2_1"/>
<dbReference type="InParanoid" id="Q93VC3"/>
<dbReference type="OMA" id="AGMRILH"/>
<dbReference type="OrthoDB" id="288590at2759"/>
<dbReference type="BRENDA" id="1.14.20.4">
    <property type="organism ID" value="4460"/>
</dbReference>
<dbReference type="PlantReactome" id="R-OSA-1119440">
    <property type="pathway name" value="Anthocyanin biosynthesis (pelargonidin 3-O-glucoside, cyanidin 3-O-glucoside)"/>
</dbReference>
<dbReference type="PlantReactome" id="R-OSA-1119514">
    <property type="pathway name" value="Anthocyanin biosynthesis (delphinidin 3-O-glucoside)"/>
</dbReference>
<dbReference type="UniPathway" id="UPA00009"/>
<dbReference type="Proteomes" id="UP000000763">
    <property type="component" value="Chromosome 1"/>
</dbReference>
<dbReference type="Proteomes" id="UP000059680">
    <property type="component" value="Chromosome 1"/>
</dbReference>
<dbReference type="GO" id="GO:0016706">
    <property type="term" value="F:2-oxoglutarate-dependent dioxygenase activity"/>
    <property type="evidence" value="ECO:0000318"/>
    <property type="project" value="GO_Central"/>
</dbReference>
<dbReference type="GO" id="GO:0031418">
    <property type="term" value="F:L-ascorbic acid binding"/>
    <property type="evidence" value="ECO:0007669"/>
    <property type="project" value="UniProtKB-KW"/>
</dbReference>
<dbReference type="GO" id="GO:0050589">
    <property type="term" value="F:leucocyanidin oxygenase activity"/>
    <property type="evidence" value="ECO:0007669"/>
    <property type="project" value="UniProtKB-EC"/>
</dbReference>
<dbReference type="GO" id="GO:0046872">
    <property type="term" value="F:metal ion binding"/>
    <property type="evidence" value="ECO:0007669"/>
    <property type="project" value="UniProtKB-KW"/>
</dbReference>
<dbReference type="GO" id="GO:0009718">
    <property type="term" value="P:anthocyanin-containing compound biosynthetic process"/>
    <property type="evidence" value="ECO:0007669"/>
    <property type="project" value="UniProtKB-UniPathway"/>
</dbReference>
<dbReference type="FunFam" id="2.60.120.330:FF:000009">
    <property type="entry name" value="Flavonol synthase"/>
    <property type="match status" value="1"/>
</dbReference>
<dbReference type="Gene3D" id="2.60.120.330">
    <property type="entry name" value="B-lactam Antibiotic, Isopenicillin N Synthase, Chain"/>
    <property type="match status" value="1"/>
</dbReference>
<dbReference type="InterPro" id="IPR026992">
    <property type="entry name" value="DIOX_N"/>
</dbReference>
<dbReference type="InterPro" id="IPR044861">
    <property type="entry name" value="IPNS-like_FE2OG_OXY"/>
</dbReference>
<dbReference type="InterPro" id="IPR027443">
    <property type="entry name" value="IPNS-like_sf"/>
</dbReference>
<dbReference type="InterPro" id="IPR050231">
    <property type="entry name" value="Iron_ascorbate_oxido_reductase"/>
</dbReference>
<dbReference type="InterPro" id="IPR005123">
    <property type="entry name" value="Oxoglu/Fe-dep_dioxygenase_dom"/>
</dbReference>
<dbReference type="PANTHER" id="PTHR47990">
    <property type="entry name" value="2-OXOGLUTARATE (2OG) AND FE(II)-DEPENDENT OXYGENASE SUPERFAMILY PROTEIN-RELATED"/>
    <property type="match status" value="1"/>
</dbReference>
<dbReference type="Pfam" id="PF03171">
    <property type="entry name" value="2OG-FeII_Oxy"/>
    <property type="match status" value="1"/>
</dbReference>
<dbReference type="Pfam" id="PF14226">
    <property type="entry name" value="DIOX_N"/>
    <property type="match status" value="1"/>
</dbReference>
<dbReference type="PRINTS" id="PR00682">
    <property type="entry name" value="IPNSYNTHASE"/>
</dbReference>
<dbReference type="SUPFAM" id="SSF51197">
    <property type="entry name" value="Clavaminate synthase-like"/>
    <property type="match status" value="1"/>
</dbReference>
<dbReference type="PROSITE" id="PS51471">
    <property type="entry name" value="FE2OG_OXY"/>
    <property type="match status" value="1"/>
</dbReference>
<sequence>MTDVELRVEALSLSGVSAIPPEYVRPEEERADLGDALELARAASDDDATARIPVVDISAFDNDGDGRHACVEAVRAAAEEWGVIHIAGHGLPGDVLGRLRAAGEAFFALPIAEKEAYANDPAAGRLQGYGSKLAANASGKREWEDYLFHLVHPDHLADHSLWPANPPEYVPVSRDFGGRVRTLASKLLAILSLGLGLPEETLERRLRGHELAGVDDDLLLQLKINYYPRCPRPDLAVGVEAHTDVSALSFILHNGVPGLQVHHAGSWVTARPEPGTIVVHVGDALEILTNGRYTSVLHRGLVSRDAVRLSWVVFCEPPPESVLLQPVPELLADGADKPLFAPRTFKQHVQRKLFEKLKDQQDNNAAAASNGMRTK</sequence>
<feature type="chain" id="PRO_0000440775" description="Leucoanthocyanidin dioxygenase 1">
    <location>
        <begin position="1"/>
        <end position="375"/>
    </location>
</feature>
<feature type="domain" description="Fe2OG dioxygenase" evidence="3">
    <location>
        <begin position="218"/>
        <end position="317"/>
    </location>
</feature>
<feature type="binding site" evidence="3">
    <location>
        <position position="242"/>
    </location>
    <ligand>
        <name>Fe cation</name>
        <dbReference type="ChEBI" id="CHEBI:24875"/>
    </ligand>
</feature>
<feature type="binding site" evidence="3">
    <location>
        <position position="244"/>
    </location>
    <ligand>
        <name>Fe cation</name>
        <dbReference type="ChEBI" id="CHEBI:24875"/>
    </ligand>
</feature>
<feature type="binding site" evidence="3">
    <location>
        <position position="298"/>
    </location>
    <ligand>
        <name>Fe cation</name>
        <dbReference type="ChEBI" id="CHEBI:24875"/>
    </ligand>
</feature>
<feature type="binding site" evidence="3">
    <location>
        <position position="308"/>
    </location>
    <ligand>
        <name>2-oxoglutarate</name>
        <dbReference type="ChEBI" id="CHEBI:16810"/>
    </ligand>
</feature>
<keyword id="KW-0223">Dioxygenase</keyword>
<keyword id="KW-0284">Flavonoid biosynthesis</keyword>
<keyword id="KW-0408">Iron</keyword>
<keyword id="KW-0479">Metal-binding</keyword>
<keyword id="KW-0560">Oxidoreductase</keyword>
<keyword id="KW-1185">Reference proteome</keyword>
<keyword id="KW-0847">Vitamin C</keyword>
<gene>
    <name evidence="5" type="primary">ANS1</name>
    <name evidence="6" type="synonym">ANS</name>
    <name evidence="10" type="ordered locus">Os01g0372500</name>
    <name evidence="6" type="ordered locus">LOC_Os01g27490</name>
    <name evidence="9" type="ORF">B1039D07.24</name>
    <name evidence="8" type="ORF">B1045D11.2</name>
</gene>
<reference key="1">
    <citation type="journal article" date="2002" name="Nature">
        <title>The genome sequence and structure of rice chromosome 1.</title>
        <authorList>
            <person name="Sasaki T."/>
            <person name="Matsumoto T."/>
            <person name="Yamamoto K."/>
            <person name="Sakata K."/>
            <person name="Baba T."/>
            <person name="Katayose Y."/>
            <person name="Wu J."/>
            <person name="Niimura Y."/>
            <person name="Cheng Z."/>
            <person name="Nagamura Y."/>
            <person name="Antonio B.A."/>
            <person name="Kanamori H."/>
            <person name="Hosokawa S."/>
            <person name="Masukawa M."/>
            <person name="Arikawa K."/>
            <person name="Chiden Y."/>
            <person name="Hayashi M."/>
            <person name="Okamoto M."/>
            <person name="Ando T."/>
            <person name="Aoki H."/>
            <person name="Arita K."/>
            <person name="Hamada M."/>
            <person name="Harada C."/>
            <person name="Hijishita S."/>
            <person name="Honda M."/>
            <person name="Ichikawa Y."/>
            <person name="Idonuma A."/>
            <person name="Iijima M."/>
            <person name="Ikeda M."/>
            <person name="Ikeno M."/>
            <person name="Ito S."/>
            <person name="Ito T."/>
            <person name="Ito Y."/>
            <person name="Ito Y."/>
            <person name="Iwabuchi A."/>
            <person name="Kamiya K."/>
            <person name="Karasawa W."/>
            <person name="Katagiri S."/>
            <person name="Kikuta A."/>
            <person name="Kobayashi N."/>
            <person name="Kono I."/>
            <person name="Machita K."/>
            <person name="Maehara T."/>
            <person name="Mizuno H."/>
            <person name="Mizubayashi T."/>
            <person name="Mukai Y."/>
            <person name="Nagasaki H."/>
            <person name="Nakashima M."/>
            <person name="Nakama Y."/>
            <person name="Nakamichi Y."/>
            <person name="Nakamura M."/>
            <person name="Namiki N."/>
            <person name="Negishi M."/>
            <person name="Ohta I."/>
            <person name="Ono N."/>
            <person name="Saji S."/>
            <person name="Sakai K."/>
            <person name="Shibata M."/>
            <person name="Shimokawa T."/>
            <person name="Shomura A."/>
            <person name="Song J."/>
            <person name="Takazaki Y."/>
            <person name="Terasawa K."/>
            <person name="Tsuji K."/>
            <person name="Waki K."/>
            <person name="Yamagata H."/>
            <person name="Yamane H."/>
            <person name="Yoshiki S."/>
            <person name="Yoshihara R."/>
            <person name="Yukawa K."/>
            <person name="Zhong H."/>
            <person name="Iwama H."/>
            <person name="Endo T."/>
            <person name="Ito H."/>
            <person name="Hahn J.H."/>
            <person name="Kim H.-I."/>
            <person name="Eun M.-Y."/>
            <person name="Yano M."/>
            <person name="Jiang J."/>
            <person name="Gojobori T."/>
        </authorList>
    </citation>
    <scope>NUCLEOTIDE SEQUENCE [LARGE SCALE GENOMIC DNA]</scope>
    <source>
        <strain>cv. Nipponbare</strain>
    </source>
</reference>
<reference key="2">
    <citation type="journal article" date="2005" name="Nature">
        <title>The map-based sequence of the rice genome.</title>
        <authorList>
            <consortium name="International rice genome sequencing project (IRGSP)"/>
        </authorList>
    </citation>
    <scope>NUCLEOTIDE SEQUENCE [LARGE SCALE GENOMIC DNA]</scope>
    <source>
        <strain>cv. Nipponbare</strain>
    </source>
</reference>
<reference key="3">
    <citation type="journal article" date="2008" name="Nucleic Acids Res.">
        <title>The rice annotation project database (RAP-DB): 2008 update.</title>
        <authorList>
            <consortium name="The rice annotation project (RAP)"/>
        </authorList>
    </citation>
    <scope>GENOME REANNOTATION</scope>
    <source>
        <strain>cv. Nipponbare</strain>
    </source>
</reference>
<reference key="4">
    <citation type="journal article" date="2013" name="Rice">
        <title>Improvement of the Oryza sativa Nipponbare reference genome using next generation sequence and optical map data.</title>
        <authorList>
            <person name="Kawahara Y."/>
            <person name="de la Bastide M."/>
            <person name="Hamilton J.P."/>
            <person name="Kanamori H."/>
            <person name="McCombie W.R."/>
            <person name="Ouyang S."/>
            <person name="Schwartz D.C."/>
            <person name="Tanaka T."/>
            <person name="Wu J."/>
            <person name="Zhou S."/>
            <person name="Childs K.L."/>
            <person name="Davidson R.M."/>
            <person name="Lin H."/>
            <person name="Quesada-Ocampo L."/>
            <person name="Vaillancourt B."/>
            <person name="Sakai H."/>
            <person name="Lee S.S."/>
            <person name="Kim J."/>
            <person name="Numa H."/>
            <person name="Itoh T."/>
            <person name="Buell C.R."/>
            <person name="Matsumoto T."/>
        </authorList>
    </citation>
    <scope>GENOME REANNOTATION</scope>
    <source>
        <strain>cv. Nipponbare</strain>
    </source>
</reference>
<reference key="5">
    <citation type="journal article" date="2008" name="Planta">
        <title>Functional characterization of key structural genes in rice flavonoid biosynthesis.</title>
        <authorList>
            <person name="Shih C.H."/>
            <person name="Chu H."/>
            <person name="Tang L.K."/>
            <person name="Sakamoto W."/>
            <person name="Maekawa M."/>
            <person name="Chu I.K."/>
            <person name="Wang M."/>
            <person name="Lo C."/>
        </authorList>
    </citation>
    <scope>FUNCTION</scope>
    <scope>INDUCTION BY LIGHT</scope>
</reference>
<name>ANS1_ORYSJ</name>
<accession>Q93VC3</accession>
<proteinExistence type="evidence at transcript level"/>